<protein>
    <recommendedName>
        <fullName evidence="1">Large ribosomal subunit protein uL13</fullName>
    </recommendedName>
    <alternativeName>
        <fullName evidence="2">50S ribosomal protein L13</fullName>
    </alternativeName>
</protein>
<evidence type="ECO:0000255" key="1">
    <source>
        <dbReference type="HAMAP-Rule" id="MF_01366"/>
    </source>
</evidence>
<evidence type="ECO:0000305" key="2"/>
<dbReference type="EMBL" id="AE000520">
    <property type="protein sequence ID" value="AAC65975.1"/>
    <property type="molecule type" value="Genomic_DNA"/>
</dbReference>
<dbReference type="PIR" id="D71251">
    <property type="entry name" value="D71251"/>
</dbReference>
<dbReference type="RefSeq" id="WP_010882469.1">
    <property type="nucleotide sequence ID" value="NC_021490.2"/>
</dbReference>
<dbReference type="SMR" id="O83988"/>
<dbReference type="STRING" id="243276.TP_1025"/>
<dbReference type="EnsemblBacteria" id="AAC65975">
    <property type="protein sequence ID" value="AAC65975"/>
    <property type="gene ID" value="TP_1025"/>
</dbReference>
<dbReference type="GeneID" id="93876772"/>
<dbReference type="KEGG" id="tpa:TP_1025"/>
<dbReference type="KEGG" id="tpw:TPANIC_1025"/>
<dbReference type="eggNOG" id="COG0102">
    <property type="taxonomic scope" value="Bacteria"/>
</dbReference>
<dbReference type="HOGENOM" id="CLU_082184_2_2_12"/>
<dbReference type="OrthoDB" id="9801330at2"/>
<dbReference type="Proteomes" id="UP000000811">
    <property type="component" value="Chromosome"/>
</dbReference>
<dbReference type="GO" id="GO:1990904">
    <property type="term" value="C:ribonucleoprotein complex"/>
    <property type="evidence" value="ECO:0007669"/>
    <property type="project" value="UniProtKB-KW"/>
</dbReference>
<dbReference type="GO" id="GO:0005840">
    <property type="term" value="C:ribosome"/>
    <property type="evidence" value="ECO:0007669"/>
    <property type="project" value="UniProtKB-KW"/>
</dbReference>
<dbReference type="GO" id="GO:0003729">
    <property type="term" value="F:mRNA binding"/>
    <property type="evidence" value="ECO:0007669"/>
    <property type="project" value="TreeGrafter"/>
</dbReference>
<dbReference type="GO" id="GO:0003735">
    <property type="term" value="F:structural constituent of ribosome"/>
    <property type="evidence" value="ECO:0007669"/>
    <property type="project" value="InterPro"/>
</dbReference>
<dbReference type="GO" id="GO:0017148">
    <property type="term" value="P:negative regulation of translation"/>
    <property type="evidence" value="ECO:0007669"/>
    <property type="project" value="TreeGrafter"/>
</dbReference>
<dbReference type="GO" id="GO:0006412">
    <property type="term" value="P:translation"/>
    <property type="evidence" value="ECO:0007669"/>
    <property type="project" value="UniProtKB-UniRule"/>
</dbReference>
<dbReference type="CDD" id="cd00392">
    <property type="entry name" value="Ribosomal_L13"/>
    <property type="match status" value="1"/>
</dbReference>
<dbReference type="Gene3D" id="3.90.1180.10">
    <property type="entry name" value="Ribosomal protein L13"/>
    <property type="match status" value="1"/>
</dbReference>
<dbReference type="HAMAP" id="MF_01366">
    <property type="entry name" value="Ribosomal_uL13"/>
    <property type="match status" value="1"/>
</dbReference>
<dbReference type="InterPro" id="IPR005822">
    <property type="entry name" value="Ribosomal_uL13"/>
</dbReference>
<dbReference type="InterPro" id="IPR005823">
    <property type="entry name" value="Ribosomal_uL13_bac-type"/>
</dbReference>
<dbReference type="InterPro" id="IPR023563">
    <property type="entry name" value="Ribosomal_uL13_CS"/>
</dbReference>
<dbReference type="InterPro" id="IPR036899">
    <property type="entry name" value="Ribosomal_uL13_sf"/>
</dbReference>
<dbReference type="NCBIfam" id="TIGR01066">
    <property type="entry name" value="rplM_bact"/>
    <property type="match status" value="1"/>
</dbReference>
<dbReference type="PANTHER" id="PTHR11545:SF2">
    <property type="entry name" value="LARGE RIBOSOMAL SUBUNIT PROTEIN UL13M"/>
    <property type="match status" value="1"/>
</dbReference>
<dbReference type="PANTHER" id="PTHR11545">
    <property type="entry name" value="RIBOSOMAL PROTEIN L13"/>
    <property type="match status" value="1"/>
</dbReference>
<dbReference type="Pfam" id="PF00572">
    <property type="entry name" value="Ribosomal_L13"/>
    <property type="match status" value="1"/>
</dbReference>
<dbReference type="PIRSF" id="PIRSF002181">
    <property type="entry name" value="Ribosomal_L13"/>
    <property type="match status" value="1"/>
</dbReference>
<dbReference type="SUPFAM" id="SSF52161">
    <property type="entry name" value="Ribosomal protein L13"/>
    <property type="match status" value="1"/>
</dbReference>
<dbReference type="PROSITE" id="PS00783">
    <property type="entry name" value="RIBOSOMAL_L13"/>
    <property type="match status" value="1"/>
</dbReference>
<gene>
    <name evidence="1" type="primary">rplM</name>
    <name type="ordered locus">TP_1025</name>
</gene>
<comment type="function">
    <text evidence="1">This protein is one of the early assembly proteins of the 50S ribosomal subunit, although it is not seen to bind rRNA by itself. It is important during the early stages of 50S assembly.</text>
</comment>
<comment type="subunit">
    <text evidence="1">Part of the 50S ribosomal subunit.</text>
</comment>
<comment type="similarity">
    <text evidence="1">Belongs to the universal ribosomal protein uL13 family.</text>
</comment>
<proteinExistence type="inferred from homology"/>
<accession>O83988</accession>
<sequence length="142" mass="15770">MRTIFVNEREAVRAWHLIDAAGRPLGRVAARVACLLRGKHKASYTPNQEMGDYVVVINAEKVFLSGTKPKDKMYYRHSGYPGGLKSVSFSALVKRRPVEPLRHAVKGMLPKGPLGRKLIKNVKIYAGSVHPHESQNPVPLSC</sequence>
<name>RL13_TREPA</name>
<organism>
    <name type="scientific">Treponema pallidum (strain Nichols)</name>
    <dbReference type="NCBI Taxonomy" id="243276"/>
    <lineage>
        <taxon>Bacteria</taxon>
        <taxon>Pseudomonadati</taxon>
        <taxon>Spirochaetota</taxon>
        <taxon>Spirochaetia</taxon>
        <taxon>Spirochaetales</taxon>
        <taxon>Treponemataceae</taxon>
        <taxon>Treponema</taxon>
    </lineage>
</organism>
<feature type="chain" id="PRO_0000133755" description="Large ribosomal subunit protein uL13">
    <location>
        <begin position="1"/>
        <end position="142"/>
    </location>
</feature>
<keyword id="KW-1185">Reference proteome</keyword>
<keyword id="KW-0687">Ribonucleoprotein</keyword>
<keyword id="KW-0689">Ribosomal protein</keyword>
<reference key="1">
    <citation type="journal article" date="1998" name="Science">
        <title>Complete genome sequence of Treponema pallidum, the syphilis spirochete.</title>
        <authorList>
            <person name="Fraser C.M."/>
            <person name="Norris S.J."/>
            <person name="Weinstock G.M."/>
            <person name="White O."/>
            <person name="Sutton G.G."/>
            <person name="Dodson R.J."/>
            <person name="Gwinn M.L."/>
            <person name="Hickey E.K."/>
            <person name="Clayton R.A."/>
            <person name="Ketchum K.A."/>
            <person name="Sodergren E."/>
            <person name="Hardham J.M."/>
            <person name="McLeod M.P."/>
            <person name="Salzberg S.L."/>
            <person name="Peterson J.D."/>
            <person name="Khalak H.G."/>
            <person name="Richardson D.L."/>
            <person name="Howell J.K."/>
            <person name="Chidambaram M."/>
            <person name="Utterback T.R."/>
            <person name="McDonald L.A."/>
            <person name="Artiach P."/>
            <person name="Bowman C."/>
            <person name="Cotton M.D."/>
            <person name="Fujii C."/>
            <person name="Garland S.A."/>
            <person name="Hatch B."/>
            <person name="Horst K."/>
            <person name="Roberts K.M."/>
            <person name="Sandusky M."/>
            <person name="Weidman J.F."/>
            <person name="Smith H.O."/>
            <person name="Venter J.C."/>
        </authorList>
    </citation>
    <scope>NUCLEOTIDE SEQUENCE [LARGE SCALE GENOMIC DNA]</scope>
    <source>
        <strain>Nichols</strain>
    </source>
</reference>